<gene>
    <name type="primary">artI</name>
    <name type="ordered locus">b0863</name>
    <name type="ordered locus">JW0847</name>
</gene>
<dbReference type="EMBL" id="X86160">
    <property type="protein sequence ID" value="CAA60102.1"/>
    <property type="molecule type" value="Genomic_DNA"/>
</dbReference>
<dbReference type="EMBL" id="U00096">
    <property type="protein sequence ID" value="AAC73950.1"/>
    <property type="molecule type" value="Genomic_DNA"/>
</dbReference>
<dbReference type="EMBL" id="AP009048">
    <property type="protein sequence ID" value="BAA35577.1"/>
    <property type="molecule type" value="Genomic_DNA"/>
</dbReference>
<dbReference type="PIR" id="G64824">
    <property type="entry name" value="G64824"/>
</dbReference>
<dbReference type="RefSeq" id="NP_415384.1">
    <property type="nucleotide sequence ID" value="NC_000913.3"/>
</dbReference>
<dbReference type="RefSeq" id="WP_000756569.1">
    <property type="nucleotide sequence ID" value="NZ_STEB01000019.1"/>
</dbReference>
<dbReference type="SMR" id="P30859"/>
<dbReference type="BioGRID" id="4263132">
    <property type="interactions" value="18"/>
</dbReference>
<dbReference type="ComplexPortal" id="CPX-4318">
    <property type="entry name" value="Arginine ABC transporter complex, artI variant"/>
</dbReference>
<dbReference type="FunCoup" id="P30859">
    <property type="interactions" value="210"/>
</dbReference>
<dbReference type="IntAct" id="P30859">
    <property type="interactions" value="4"/>
</dbReference>
<dbReference type="STRING" id="511145.b0863"/>
<dbReference type="TCDB" id="3.A.1.3.3">
    <property type="family name" value="the atp-binding cassette (abc) superfamily"/>
</dbReference>
<dbReference type="jPOST" id="P30859"/>
<dbReference type="PaxDb" id="511145-b0863"/>
<dbReference type="EnsemblBacteria" id="AAC73950">
    <property type="protein sequence ID" value="AAC73950"/>
    <property type="gene ID" value="b0863"/>
</dbReference>
<dbReference type="GeneID" id="93776559"/>
<dbReference type="GeneID" id="948988"/>
<dbReference type="KEGG" id="ecj:JW0847"/>
<dbReference type="KEGG" id="eco:b0863"/>
<dbReference type="KEGG" id="ecoc:C3026_05375"/>
<dbReference type="PATRIC" id="fig|1411691.4.peg.1414"/>
<dbReference type="EchoBASE" id="EB1582"/>
<dbReference type="eggNOG" id="COG0834">
    <property type="taxonomic scope" value="Bacteria"/>
</dbReference>
<dbReference type="HOGENOM" id="CLU_019602_18_0_6"/>
<dbReference type="InParanoid" id="P30859"/>
<dbReference type="OMA" id="DTPFENF"/>
<dbReference type="OrthoDB" id="9768183at2"/>
<dbReference type="PhylomeDB" id="P30859"/>
<dbReference type="BioCyc" id="EcoCyc:ARTI-MONOMER"/>
<dbReference type="PRO" id="PR:P30859"/>
<dbReference type="Proteomes" id="UP000000625">
    <property type="component" value="Chromosome"/>
</dbReference>
<dbReference type="GO" id="GO:0055052">
    <property type="term" value="C:ATP-binding cassette (ABC) transporter complex, substrate-binding subunit-containing"/>
    <property type="evidence" value="ECO:0000303"/>
    <property type="project" value="ComplexPortal"/>
</dbReference>
<dbReference type="GO" id="GO:0016020">
    <property type="term" value="C:membrane"/>
    <property type="evidence" value="ECO:0000303"/>
    <property type="project" value="ComplexPortal"/>
</dbReference>
<dbReference type="GO" id="GO:0030288">
    <property type="term" value="C:outer membrane-bounded periplasmic space"/>
    <property type="evidence" value="ECO:0000314"/>
    <property type="project" value="EcoCyc"/>
</dbReference>
<dbReference type="GO" id="GO:0042597">
    <property type="term" value="C:periplasmic space"/>
    <property type="evidence" value="ECO:0000314"/>
    <property type="project" value="EcoliWiki"/>
</dbReference>
<dbReference type="GO" id="GO:0016597">
    <property type="term" value="F:amino acid binding"/>
    <property type="evidence" value="ECO:0000318"/>
    <property type="project" value="GO_Central"/>
</dbReference>
<dbReference type="GO" id="GO:0015276">
    <property type="term" value="F:ligand-gated monoatomic ion channel activity"/>
    <property type="evidence" value="ECO:0007669"/>
    <property type="project" value="InterPro"/>
</dbReference>
<dbReference type="GO" id="GO:0097638">
    <property type="term" value="P:L-arginine import across plasma membrane"/>
    <property type="evidence" value="ECO:0000303"/>
    <property type="project" value="ComplexPortal"/>
</dbReference>
<dbReference type="CDD" id="cd13700">
    <property type="entry name" value="PBP2_Arg_STM4351"/>
    <property type="match status" value="1"/>
</dbReference>
<dbReference type="FunFam" id="3.40.190.10:FF:000014">
    <property type="entry name" value="Arginine ABC transporter substrate-binding protein"/>
    <property type="match status" value="1"/>
</dbReference>
<dbReference type="Gene3D" id="3.40.190.10">
    <property type="entry name" value="Periplasmic binding protein-like II"/>
    <property type="match status" value="2"/>
</dbReference>
<dbReference type="InterPro" id="IPR054852">
    <property type="entry name" value="ArtI_ABC_transporter"/>
</dbReference>
<dbReference type="InterPro" id="IPR001320">
    <property type="entry name" value="Iontro_rcpt_C"/>
</dbReference>
<dbReference type="InterPro" id="IPR005768">
    <property type="entry name" value="Lys_Arg_Orn-bd"/>
</dbReference>
<dbReference type="InterPro" id="IPR018313">
    <property type="entry name" value="SBP_3_CS"/>
</dbReference>
<dbReference type="InterPro" id="IPR001638">
    <property type="entry name" value="Solute-binding_3/MltF_N"/>
</dbReference>
<dbReference type="NCBIfam" id="TIGR01096">
    <property type="entry name" value="3A0103s03R"/>
    <property type="match status" value="1"/>
</dbReference>
<dbReference type="NCBIfam" id="NF041764">
    <property type="entry name" value="ArtI_Ecoli"/>
    <property type="match status" value="1"/>
</dbReference>
<dbReference type="NCBIfam" id="NF011583">
    <property type="entry name" value="PRK15007.1"/>
    <property type="match status" value="1"/>
</dbReference>
<dbReference type="PANTHER" id="PTHR35936:SF20">
    <property type="entry name" value="ABC TRANSPORTER ARGININE-BINDING PROTEIN 2-RELATED"/>
    <property type="match status" value="1"/>
</dbReference>
<dbReference type="PANTHER" id="PTHR35936">
    <property type="entry name" value="MEMBRANE-BOUND LYTIC MUREIN TRANSGLYCOSYLASE F"/>
    <property type="match status" value="1"/>
</dbReference>
<dbReference type="Pfam" id="PF00497">
    <property type="entry name" value="SBP_bac_3"/>
    <property type="match status" value="1"/>
</dbReference>
<dbReference type="SMART" id="SM00062">
    <property type="entry name" value="PBPb"/>
    <property type="match status" value="1"/>
</dbReference>
<dbReference type="SMART" id="SM00079">
    <property type="entry name" value="PBPe"/>
    <property type="match status" value="1"/>
</dbReference>
<dbReference type="SUPFAM" id="SSF53850">
    <property type="entry name" value="Periplasmic binding protein-like II"/>
    <property type="match status" value="1"/>
</dbReference>
<dbReference type="PROSITE" id="PS01039">
    <property type="entry name" value="SBP_BACTERIAL_3"/>
    <property type="match status" value="1"/>
</dbReference>
<keyword id="KW-0029">Amino-acid transport</keyword>
<keyword id="KW-0903">Direct protein sequencing</keyword>
<keyword id="KW-0574">Periplasm</keyword>
<keyword id="KW-1185">Reference proteome</keyword>
<keyword id="KW-0732">Signal</keyword>
<keyword id="KW-0813">Transport</keyword>
<reference key="1">
    <citation type="journal article" date="1993" name="J. Bacteriol.">
        <title>Physical map location of the new artPIQMJ genes of Escherichia coli, encoding a periplasmic arginine transport system.</title>
        <authorList>
            <person name="Wissenbach U."/>
            <person name="Unden G."/>
        </authorList>
    </citation>
    <scope>NUCLEOTIDE SEQUENCE [GENOMIC DNA]</scope>
    <source>
        <strain>K12 / AN387</strain>
    </source>
</reference>
<reference key="2">
    <citation type="submission" date="1995-01" db="EMBL/GenBank/DDBJ databases">
        <authorList>
            <person name="Wissenbach U."/>
            <person name="Unden G."/>
        </authorList>
    </citation>
    <scope>SEQUENCE REVISION TO 48</scope>
    <source>
        <strain>K12 / AN387</strain>
    </source>
</reference>
<reference key="3">
    <citation type="journal article" date="1996" name="DNA Res.">
        <title>A 718-kb DNA sequence of the Escherichia coli K-12 genome corresponding to the 12.7-28.0 min region on the linkage map.</title>
        <authorList>
            <person name="Oshima T."/>
            <person name="Aiba H."/>
            <person name="Baba T."/>
            <person name="Fujita K."/>
            <person name="Hayashi K."/>
            <person name="Honjo A."/>
            <person name="Ikemoto K."/>
            <person name="Inada T."/>
            <person name="Itoh T."/>
            <person name="Kajihara M."/>
            <person name="Kanai K."/>
            <person name="Kashimoto K."/>
            <person name="Kimura S."/>
            <person name="Kitagawa M."/>
            <person name="Makino K."/>
            <person name="Masuda S."/>
            <person name="Miki T."/>
            <person name="Mizobuchi K."/>
            <person name="Mori H."/>
            <person name="Motomura K."/>
            <person name="Nakamura Y."/>
            <person name="Nashimoto H."/>
            <person name="Nishio Y."/>
            <person name="Saito N."/>
            <person name="Sampei G."/>
            <person name="Seki Y."/>
            <person name="Tagami H."/>
            <person name="Takemoto K."/>
            <person name="Wada C."/>
            <person name="Yamamoto Y."/>
            <person name="Yano M."/>
            <person name="Horiuchi T."/>
        </authorList>
    </citation>
    <scope>NUCLEOTIDE SEQUENCE [LARGE SCALE GENOMIC DNA]</scope>
    <source>
        <strain>K12 / W3110 / ATCC 27325 / DSM 5911</strain>
    </source>
</reference>
<reference key="4">
    <citation type="journal article" date="1997" name="Science">
        <title>The complete genome sequence of Escherichia coli K-12.</title>
        <authorList>
            <person name="Blattner F.R."/>
            <person name="Plunkett G. III"/>
            <person name="Bloch C.A."/>
            <person name="Perna N.T."/>
            <person name="Burland V."/>
            <person name="Riley M."/>
            <person name="Collado-Vides J."/>
            <person name="Glasner J.D."/>
            <person name="Rode C.K."/>
            <person name="Mayhew G.F."/>
            <person name="Gregor J."/>
            <person name="Davis N.W."/>
            <person name="Kirkpatrick H.A."/>
            <person name="Goeden M.A."/>
            <person name="Rose D.J."/>
            <person name="Mau B."/>
            <person name="Shao Y."/>
        </authorList>
    </citation>
    <scope>NUCLEOTIDE SEQUENCE [LARGE SCALE GENOMIC DNA]</scope>
    <source>
        <strain>K12 / MG1655 / ATCC 47076</strain>
    </source>
</reference>
<reference key="5">
    <citation type="journal article" date="2006" name="Mol. Syst. Biol.">
        <title>Highly accurate genome sequences of Escherichia coli K-12 strains MG1655 and W3110.</title>
        <authorList>
            <person name="Hayashi K."/>
            <person name="Morooka N."/>
            <person name="Yamamoto Y."/>
            <person name="Fujita K."/>
            <person name="Isono K."/>
            <person name="Choi S."/>
            <person name="Ohtsubo E."/>
            <person name="Baba T."/>
            <person name="Wanner B.L."/>
            <person name="Mori H."/>
            <person name="Horiuchi T."/>
        </authorList>
    </citation>
    <scope>NUCLEOTIDE SEQUENCE [LARGE SCALE GENOMIC DNA]</scope>
    <source>
        <strain>K12 / W3110 / ATCC 27325 / DSM 5911</strain>
    </source>
</reference>
<reference key="6">
    <citation type="journal article" date="1995" name="Mol. Microbiol.">
        <title>A third periplasmic transport system for L-arginine in Escherichia coli: molecular characterization of the artPIQMJ genes, arginine binding and transport.</title>
        <authorList>
            <person name="Wissenbach U."/>
            <person name="Six S."/>
            <person name="Bongaerts J."/>
            <person name="Ternes D."/>
            <person name="Steinwachs S."/>
            <person name="Unden G."/>
        </authorList>
    </citation>
    <scope>PROTEIN SEQUENCE OF 20-29</scope>
    <scope>FUNCTION</scope>
    <scope>SUBUNIT</scope>
    <scope>SUBCELLULAR LOCATION</scope>
</reference>
<reference key="7">
    <citation type="journal article" date="1997" name="Electrophoresis">
        <title>Comparing the predicted and observed properties of proteins encoded in the genome of Escherichia coli K-12.</title>
        <authorList>
            <person name="Link A.J."/>
            <person name="Robison K."/>
            <person name="Church G.M."/>
        </authorList>
    </citation>
    <scope>PROTEIN SEQUENCE OF 20-31</scope>
    <source>
        <strain>K12 / EMG2</strain>
    </source>
</reference>
<reference key="8">
    <citation type="journal article" date="1998" name="J. Mol. Biol.">
        <title>Protein identification with N and C-terminal sequence tags in proteome projects.</title>
        <authorList>
            <person name="Wilkins M.R."/>
            <person name="Gasteiger E."/>
            <person name="Tonella L."/>
            <person name="Ou K."/>
            <person name="Tyler M."/>
            <person name="Sanchez J.-C."/>
            <person name="Gooley A.A."/>
            <person name="Walsh B.J."/>
            <person name="Bairoch A."/>
            <person name="Appel R.D."/>
            <person name="Williams K.L."/>
            <person name="Hochstrasser D.F."/>
        </authorList>
    </citation>
    <scope>PROTEIN SEQUENCE OF 20-23</scope>
    <source>
        <strain>K12 / W3110 / ATCC 27325 / DSM 5911</strain>
    </source>
</reference>
<protein>
    <recommendedName>
        <fullName>Putative ABC transporter arginine-binding protein 2</fullName>
    </recommendedName>
</protein>
<comment type="function">
    <text evidence="1">Part of the ABC transporter complex ArtPIQMJ involved in arginine transport.</text>
</comment>
<comment type="subunit">
    <text evidence="5">The complex is composed of two ATP-binding proteins (ArtP), two transmembrane proteins (ArtM and ArtQ) and two solute-binding proteins (ArtJ and ArtI).</text>
</comment>
<comment type="subcellular location">
    <subcellularLocation>
        <location evidence="1">Periplasm</location>
    </subcellularLocation>
</comment>
<comment type="similarity">
    <text evidence="4">Belongs to the bacterial solute-binding protein 3 family.</text>
</comment>
<sequence length="243" mass="26930">MKKVLIAALIAGFSLSATAAETIRFATEASYPPFESIDANNQIVGFDVDLAQALCKEIDATCTFSNQAFDSLIPSLKFRRVEAVMAGMDITPEREKQVLFTTPYYDNSALFVGQQGKYTSVDQLKGKKVGVQNGTTHQKFIMDKHPEITTVPYDSYQNAKLDLQNGRIDGVFGDTAVVTEWLKDNPKLAAVGDKVTDKDYFGTGLGIAVRQGNTELQQKLNTALEKVKKDGTYETIYNKWFQK</sequence>
<name>ARTI_ECOLI</name>
<evidence type="ECO:0000269" key="1">
    <source>
    </source>
</evidence>
<evidence type="ECO:0000269" key="2">
    <source>
    </source>
</evidence>
<evidence type="ECO:0000269" key="3">
    <source>
    </source>
</evidence>
<evidence type="ECO:0000305" key="4"/>
<evidence type="ECO:0000305" key="5">
    <source>
    </source>
</evidence>
<proteinExistence type="evidence at protein level"/>
<organism>
    <name type="scientific">Escherichia coli (strain K12)</name>
    <dbReference type="NCBI Taxonomy" id="83333"/>
    <lineage>
        <taxon>Bacteria</taxon>
        <taxon>Pseudomonadati</taxon>
        <taxon>Pseudomonadota</taxon>
        <taxon>Gammaproteobacteria</taxon>
        <taxon>Enterobacterales</taxon>
        <taxon>Enterobacteriaceae</taxon>
        <taxon>Escherichia</taxon>
    </lineage>
</organism>
<accession>P30859</accession>
<accession>P77640</accession>
<feature type="signal peptide" evidence="1 2 3">
    <location>
        <begin position="1"/>
        <end position="19"/>
    </location>
</feature>
<feature type="chain" id="PRO_0000031751" description="Putative ABC transporter arginine-binding protein 2">
    <location>
        <begin position="20"/>
        <end position="243"/>
    </location>
</feature>
<feature type="sequence conflict" description="In Ref. 1." evidence="4" ref="1">
    <original>V</original>
    <variation>VV</variation>
    <location>
        <position position="48"/>
    </location>
</feature>
<feature type="sequence conflict" description="In Ref. 1; CAA60102." evidence="4" ref="1">
    <original>A</original>
    <variation>G</variation>
    <location>
        <position position="86"/>
    </location>
</feature>
<feature type="sequence conflict" description="In Ref. 1; CAA60102." evidence="4" ref="1">
    <original>G</original>
    <variation>RS</variation>
    <location>
        <position position="130"/>
    </location>
</feature>
<feature type="sequence conflict" description="In Ref. 1; CAA60102." evidence="4" ref="1">
    <original>Q</original>
    <variation>E</variation>
    <location>
        <position position="164"/>
    </location>
</feature>
<feature type="sequence conflict" description="In Ref. 1; CAA60102." evidence="4" ref="1">
    <original>T</original>
    <variation>H</variation>
    <location>
        <position position="179"/>
    </location>
</feature>
<feature type="sequence conflict" description="In Ref. 1; CAA60102." evidence="4" ref="1">
    <original>AA</original>
    <variation>VV</variation>
    <location>
        <begin position="189"/>
        <end position="190"/>
    </location>
</feature>